<evidence type="ECO:0000255" key="1">
    <source>
        <dbReference type="PROSITE-ProRule" id="PRU00159"/>
    </source>
</evidence>
<evidence type="ECO:0000255" key="2">
    <source>
        <dbReference type="PROSITE-ProRule" id="PRU10027"/>
    </source>
</evidence>
<evidence type="ECO:0000256" key="3">
    <source>
        <dbReference type="SAM" id="MobiDB-lite"/>
    </source>
</evidence>
<gene>
    <name type="primary">PK2</name>
</gene>
<dbReference type="EC" id="2.7.11.1"/>
<dbReference type="EMBL" id="X63648">
    <property type="protein sequence ID" value="CAA45179.1"/>
    <property type="molecule type" value="mRNA"/>
</dbReference>
<dbReference type="PIR" id="S23466">
    <property type="entry name" value="S23466"/>
</dbReference>
<dbReference type="SMR" id="Q02595"/>
<dbReference type="GO" id="GO:0016020">
    <property type="term" value="C:membrane"/>
    <property type="evidence" value="ECO:0007669"/>
    <property type="project" value="UniProtKB-SubCell"/>
</dbReference>
<dbReference type="GO" id="GO:0005524">
    <property type="term" value="F:ATP binding"/>
    <property type="evidence" value="ECO:0007669"/>
    <property type="project" value="UniProtKB-KW"/>
</dbReference>
<dbReference type="GO" id="GO:0106310">
    <property type="term" value="F:protein serine kinase activity"/>
    <property type="evidence" value="ECO:0007669"/>
    <property type="project" value="RHEA"/>
</dbReference>
<dbReference type="GO" id="GO:0004674">
    <property type="term" value="F:protein serine/threonine kinase activity"/>
    <property type="evidence" value="ECO:0007669"/>
    <property type="project" value="UniProtKB-KW"/>
</dbReference>
<dbReference type="CDD" id="cd05117">
    <property type="entry name" value="STKc_CAMK"/>
    <property type="match status" value="1"/>
</dbReference>
<dbReference type="FunFam" id="1.10.510.10:FF:000893">
    <property type="entry name" value="CAMK/CAMK1 protein kinase"/>
    <property type="match status" value="1"/>
</dbReference>
<dbReference type="Gene3D" id="1.10.510.10">
    <property type="entry name" value="Transferase(Phosphotransferase) domain 1"/>
    <property type="match status" value="1"/>
</dbReference>
<dbReference type="InterPro" id="IPR050205">
    <property type="entry name" value="CDPK_Ser/Thr_kinases"/>
</dbReference>
<dbReference type="InterPro" id="IPR011009">
    <property type="entry name" value="Kinase-like_dom_sf"/>
</dbReference>
<dbReference type="InterPro" id="IPR000719">
    <property type="entry name" value="Prot_kinase_dom"/>
</dbReference>
<dbReference type="InterPro" id="IPR017441">
    <property type="entry name" value="Protein_kinase_ATP_BS"/>
</dbReference>
<dbReference type="InterPro" id="IPR008271">
    <property type="entry name" value="Ser/Thr_kinase_AS"/>
</dbReference>
<dbReference type="PANTHER" id="PTHR24349">
    <property type="entry name" value="SERINE/THREONINE-PROTEIN KINASE"/>
    <property type="match status" value="1"/>
</dbReference>
<dbReference type="Pfam" id="PF00069">
    <property type="entry name" value="Pkinase"/>
    <property type="match status" value="1"/>
</dbReference>
<dbReference type="SMART" id="SM00220">
    <property type="entry name" value="S_TKc"/>
    <property type="match status" value="1"/>
</dbReference>
<dbReference type="SUPFAM" id="SSF56112">
    <property type="entry name" value="Protein kinase-like (PK-like)"/>
    <property type="match status" value="1"/>
</dbReference>
<dbReference type="PROSITE" id="PS00107">
    <property type="entry name" value="PROTEIN_KINASE_ATP"/>
    <property type="match status" value="1"/>
</dbReference>
<dbReference type="PROSITE" id="PS50011">
    <property type="entry name" value="PROTEIN_KINASE_DOM"/>
    <property type="match status" value="1"/>
</dbReference>
<dbReference type="PROSITE" id="PS00108">
    <property type="entry name" value="PROTEIN_KINASE_ST"/>
    <property type="match status" value="1"/>
</dbReference>
<protein>
    <recommendedName>
        <fullName>Probable serine/threonine-protein kinase 2</fullName>
        <ecNumber>2.7.11.1</ecNumber>
    </recommendedName>
</protein>
<name>KPK2_PLAFK</name>
<organism>
    <name type="scientific">Plasmodium falciparum (isolate K1 / Thailand)</name>
    <dbReference type="NCBI Taxonomy" id="5839"/>
    <lineage>
        <taxon>Eukaryota</taxon>
        <taxon>Sar</taxon>
        <taxon>Alveolata</taxon>
        <taxon>Apicomplexa</taxon>
        <taxon>Aconoidasida</taxon>
        <taxon>Haemosporida</taxon>
        <taxon>Plasmodiidae</taxon>
        <taxon>Plasmodium</taxon>
        <taxon>Plasmodium (Laverania)</taxon>
    </lineage>
</organism>
<comment type="catalytic activity">
    <reaction>
        <text>L-seryl-[protein] + ATP = O-phospho-L-seryl-[protein] + ADP + H(+)</text>
        <dbReference type="Rhea" id="RHEA:17989"/>
        <dbReference type="Rhea" id="RHEA-COMP:9863"/>
        <dbReference type="Rhea" id="RHEA-COMP:11604"/>
        <dbReference type="ChEBI" id="CHEBI:15378"/>
        <dbReference type="ChEBI" id="CHEBI:29999"/>
        <dbReference type="ChEBI" id="CHEBI:30616"/>
        <dbReference type="ChEBI" id="CHEBI:83421"/>
        <dbReference type="ChEBI" id="CHEBI:456216"/>
        <dbReference type="EC" id="2.7.11.1"/>
    </reaction>
</comment>
<comment type="catalytic activity">
    <reaction>
        <text>L-threonyl-[protein] + ATP = O-phospho-L-threonyl-[protein] + ADP + H(+)</text>
        <dbReference type="Rhea" id="RHEA:46608"/>
        <dbReference type="Rhea" id="RHEA-COMP:11060"/>
        <dbReference type="Rhea" id="RHEA-COMP:11605"/>
        <dbReference type="ChEBI" id="CHEBI:15378"/>
        <dbReference type="ChEBI" id="CHEBI:30013"/>
        <dbReference type="ChEBI" id="CHEBI:30616"/>
        <dbReference type="ChEBI" id="CHEBI:61977"/>
        <dbReference type="ChEBI" id="CHEBI:456216"/>
        <dbReference type="EC" id="2.7.11.1"/>
    </reaction>
</comment>
<comment type="subcellular location">
    <subcellularLocation>
        <location>Membrane</location>
    </subcellularLocation>
</comment>
<comment type="developmental stage">
    <text>Is highly expressed during the young trophozoite stage but gradually decreases in amount with further growth. No protein can be detected during the ring stage, only small amount is expressed during the schizont stage.</text>
</comment>
<comment type="similarity">
    <text evidence="1">Belongs to the protein kinase superfamily. Ser/Thr protein kinase family.</text>
</comment>
<sequence>MEKRYQQLFKGKRIDFPLATGAASHVSLTYDEKKNPYLLCWTYIYQEKPEFTVPLKGCRIINNITEIGPCIHIITSNEEYQFQCRSKEEFDEMSQFFNMLGYPILGFKNVYVLNKKIGKGSFSTAYIGTNILYGNRVVVKEVDKSKVKESNVYTEIEVLRKVMHKYIIKLISAYEQEGFVYLVLEYLKGGELFEYLNNNGPYTEQVAKKAMKRVLIALEALHSNGVVHRDLKMENLMLENPNDPSSLKIIDFGLASFLNSPSMNMRCGSPGYVAPEILKCASYGTKVDIFSLGVILFNILCGYPPFRGNNVKEIFKKNMRCHISFNTKHWINKSESVKEIILWMCCKNPDDRCTALQALGHQWFLPKLTDMHMTANINELKRNEAIVHKSNDQQDMCKKCKHFNNTQNDDIYNNNNNNNQLDPNKNHKNNYNDYKNYFDTMLKIDDKYSENLIKDKTSMDSISLNKKDYDAYLVHSNEHDTVVLHGKCQTTKNSSSLLSYKCSRRSPPQN</sequence>
<proteinExistence type="evidence at transcript level"/>
<keyword id="KW-0067">ATP-binding</keyword>
<keyword id="KW-0418">Kinase</keyword>
<keyword id="KW-0472">Membrane</keyword>
<keyword id="KW-0547">Nucleotide-binding</keyword>
<keyword id="KW-0723">Serine/threonine-protein kinase</keyword>
<keyword id="KW-0808">Transferase</keyword>
<reference key="1">
    <citation type="journal article" date="1992" name="Eur. J. Biochem.">
        <title>Molecular cloning, stage-specific expression and cellular distribution of a putative protein kinase from Plasmodium falciparum.</title>
        <authorList>
            <person name="Zhao Y."/>
            <person name="Kappes B."/>
            <person name="Yang J."/>
            <person name="Franklin R.M."/>
        </authorList>
    </citation>
    <scope>NUCLEOTIDE SEQUENCE [MRNA]</scope>
</reference>
<accession>Q02595</accession>
<feature type="chain" id="PRO_0000086165" description="Probable serine/threonine-protein kinase 2">
    <location>
        <begin position="1"/>
        <end position="510"/>
    </location>
</feature>
<feature type="domain" description="Protein kinase" evidence="1">
    <location>
        <begin position="111"/>
        <end position="364"/>
    </location>
</feature>
<feature type="region of interest" description="Disordered" evidence="3">
    <location>
        <begin position="408"/>
        <end position="428"/>
    </location>
</feature>
<feature type="active site" description="Proton acceptor" evidence="1 2">
    <location>
        <position position="230"/>
    </location>
</feature>
<feature type="binding site" evidence="1">
    <location>
        <begin position="117"/>
        <end position="125"/>
    </location>
    <ligand>
        <name>ATP</name>
        <dbReference type="ChEBI" id="CHEBI:30616"/>
    </ligand>
</feature>
<feature type="binding site" evidence="1">
    <location>
        <position position="140"/>
    </location>
    <ligand>
        <name>ATP</name>
        <dbReference type="ChEBI" id="CHEBI:30616"/>
    </ligand>
</feature>